<organism>
    <name type="scientific">Sweet potato mild mottle virus (isolate Salazar)</name>
    <name type="common">SPMMV</name>
    <dbReference type="NCBI Taxonomy" id="652105"/>
    <lineage>
        <taxon>Viruses</taxon>
        <taxon>Riboviria</taxon>
        <taxon>Orthornavirae</taxon>
        <taxon>Pisuviricota</taxon>
        <taxon>Stelpaviricetes</taxon>
        <taxon>Patatavirales</taxon>
        <taxon>Potyviridae</taxon>
        <taxon>Ipomovirus</taxon>
        <taxon>Sweet potato mild mottle virus</taxon>
    </lineage>
</organism>
<dbReference type="EC" id="3.4.-.-" evidence="2"/>
<dbReference type="EC" id="3.4.22.45" evidence="2"/>
<dbReference type="EC" id="3.6.4.-"/>
<dbReference type="EC" id="3.4.22.44"/>
<dbReference type="EC" id="2.7.7.48"/>
<dbReference type="EMBL" id="Z73124">
    <property type="protein sequence ID" value="CAA97466.1"/>
    <property type="molecule type" value="mRNA"/>
</dbReference>
<dbReference type="RefSeq" id="NP_620656.1">
    <property type="nucleotide sequence ID" value="NC_003797.1"/>
</dbReference>
<dbReference type="SMR" id="P89201"/>
<dbReference type="MEROPS" id="C04.013"/>
<dbReference type="GeneID" id="944381"/>
<dbReference type="KEGG" id="vg:944381"/>
<dbReference type="Proteomes" id="UP000007084">
    <property type="component" value="Segment"/>
</dbReference>
<dbReference type="GO" id="GO:0019029">
    <property type="term" value="C:helical viral capsid"/>
    <property type="evidence" value="ECO:0007669"/>
    <property type="project" value="UniProtKB-KW"/>
</dbReference>
<dbReference type="GO" id="GO:0044161">
    <property type="term" value="C:host cell cytoplasmic vesicle"/>
    <property type="evidence" value="ECO:0007669"/>
    <property type="project" value="UniProtKB-SubCell"/>
</dbReference>
<dbReference type="GO" id="GO:0005524">
    <property type="term" value="F:ATP binding"/>
    <property type="evidence" value="ECO:0007669"/>
    <property type="project" value="UniProtKB-KW"/>
</dbReference>
<dbReference type="GO" id="GO:0004197">
    <property type="term" value="F:cysteine-type endopeptidase activity"/>
    <property type="evidence" value="ECO:0007669"/>
    <property type="project" value="InterPro"/>
</dbReference>
<dbReference type="GO" id="GO:0004386">
    <property type="term" value="F:helicase activity"/>
    <property type="evidence" value="ECO:0007669"/>
    <property type="project" value="UniProtKB-KW"/>
</dbReference>
<dbReference type="GO" id="GO:0016818">
    <property type="term" value="F:hydrolase activity, acting on acid anhydrides, in phosphorus-containing anhydrides"/>
    <property type="evidence" value="ECO:0007669"/>
    <property type="project" value="InterPro"/>
</dbReference>
<dbReference type="GO" id="GO:0003723">
    <property type="term" value="F:RNA binding"/>
    <property type="evidence" value="ECO:0007669"/>
    <property type="project" value="InterPro"/>
</dbReference>
<dbReference type="GO" id="GO:0003968">
    <property type="term" value="F:RNA-directed RNA polymerase activity"/>
    <property type="evidence" value="ECO:0007669"/>
    <property type="project" value="UniProtKB-KW"/>
</dbReference>
<dbReference type="GO" id="GO:0008236">
    <property type="term" value="F:serine-type peptidase activity"/>
    <property type="evidence" value="ECO:0007669"/>
    <property type="project" value="UniProtKB-KW"/>
</dbReference>
<dbReference type="GO" id="GO:0005198">
    <property type="term" value="F:structural molecule activity"/>
    <property type="evidence" value="ECO:0007669"/>
    <property type="project" value="InterPro"/>
</dbReference>
<dbReference type="GO" id="GO:0006351">
    <property type="term" value="P:DNA-templated transcription"/>
    <property type="evidence" value="ECO:0007669"/>
    <property type="project" value="InterPro"/>
</dbReference>
<dbReference type="GO" id="GO:0006508">
    <property type="term" value="P:proteolysis"/>
    <property type="evidence" value="ECO:0007669"/>
    <property type="project" value="UniProtKB-KW"/>
</dbReference>
<dbReference type="GO" id="GO:0052170">
    <property type="term" value="P:symbiont-mediated suppression of host innate immune response"/>
    <property type="evidence" value="ECO:0007669"/>
    <property type="project" value="UniProtKB-KW"/>
</dbReference>
<dbReference type="GO" id="GO:0039694">
    <property type="term" value="P:viral RNA genome replication"/>
    <property type="evidence" value="ECO:0007669"/>
    <property type="project" value="InterPro"/>
</dbReference>
<dbReference type="CDD" id="cd23175">
    <property type="entry name" value="ps-ssRNAv_Potyviridae_RdRp"/>
    <property type="match status" value="1"/>
</dbReference>
<dbReference type="Gene3D" id="3.30.70.270">
    <property type="match status" value="1"/>
</dbReference>
<dbReference type="Gene3D" id="3.90.70.150">
    <property type="entry name" value="Helper component proteinase"/>
    <property type="match status" value="1"/>
</dbReference>
<dbReference type="Gene3D" id="3.40.50.300">
    <property type="entry name" value="P-loop containing nucleotide triphosphate hydrolases"/>
    <property type="match status" value="2"/>
</dbReference>
<dbReference type="Gene3D" id="2.40.10.10">
    <property type="entry name" value="Trypsin-like serine proteases"/>
    <property type="match status" value="2"/>
</dbReference>
<dbReference type="InterPro" id="IPR043502">
    <property type="entry name" value="DNA/RNA_pol_sf"/>
</dbReference>
<dbReference type="InterPro" id="IPR001456">
    <property type="entry name" value="HC-pro"/>
</dbReference>
<dbReference type="InterPro" id="IPR031159">
    <property type="entry name" value="HC_PRO_CPD_dom"/>
</dbReference>
<dbReference type="InterPro" id="IPR042308">
    <property type="entry name" value="HC_PRO_CPD_sf"/>
</dbReference>
<dbReference type="InterPro" id="IPR014001">
    <property type="entry name" value="Helicase_ATP-bd"/>
</dbReference>
<dbReference type="InterPro" id="IPR001650">
    <property type="entry name" value="Helicase_C-like"/>
</dbReference>
<dbReference type="InterPro" id="IPR027417">
    <property type="entry name" value="P-loop_NTPase"/>
</dbReference>
<dbReference type="InterPro" id="IPR025910">
    <property type="entry name" value="P1_Ser_Pept_dom"/>
</dbReference>
<dbReference type="InterPro" id="IPR002540">
    <property type="entry name" value="Pept_S30_P1_potyvir"/>
</dbReference>
<dbReference type="InterPro" id="IPR009003">
    <property type="entry name" value="Peptidase_S1_PA"/>
</dbReference>
<dbReference type="InterPro" id="IPR043504">
    <property type="entry name" value="Peptidase_S1_PA_chymotrypsin"/>
</dbReference>
<dbReference type="InterPro" id="IPR001592">
    <property type="entry name" value="Poty_coat"/>
</dbReference>
<dbReference type="InterPro" id="IPR001730">
    <property type="entry name" value="Potyv_NIa-pro_dom"/>
</dbReference>
<dbReference type="InterPro" id="IPR013648">
    <property type="entry name" value="PP_Potyviridae"/>
</dbReference>
<dbReference type="InterPro" id="IPR043128">
    <property type="entry name" value="Rev_trsase/Diguanyl_cyclase"/>
</dbReference>
<dbReference type="InterPro" id="IPR001205">
    <property type="entry name" value="RNA-dir_pol_C"/>
</dbReference>
<dbReference type="InterPro" id="IPR007094">
    <property type="entry name" value="RNA-dir_pol_PSvirus"/>
</dbReference>
<dbReference type="PANTHER" id="PTHR18934:SF237">
    <property type="entry name" value="ATP-DEPENDENT DNA_RNA HELICASE DHX36"/>
    <property type="match status" value="1"/>
</dbReference>
<dbReference type="PANTHER" id="PTHR18934">
    <property type="entry name" value="ATP-DEPENDENT RNA HELICASE"/>
    <property type="match status" value="1"/>
</dbReference>
<dbReference type="Pfam" id="PF00271">
    <property type="entry name" value="Helicase_C"/>
    <property type="match status" value="1"/>
</dbReference>
<dbReference type="Pfam" id="PF00863">
    <property type="entry name" value="Peptidase_C4"/>
    <property type="match status" value="1"/>
</dbReference>
<dbReference type="Pfam" id="PF00851">
    <property type="entry name" value="Peptidase_C6"/>
    <property type="match status" value="1"/>
</dbReference>
<dbReference type="Pfam" id="PF13611">
    <property type="entry name" value="Peptidase_S76"/>
    <property type="match status" value="1"/>
</dbReference>
<dbReference type="Pfam" id="PF00767">
    <property type="entry name" value="Poty_coat"/>
    <property type="match status" value="1"/>
</dbReference>
<dbReference type="Pfam" id="PF08440">
    <property type="entry name" value="Poty_PP"/>
    <property type="match status" value="1"/>
</dbReference>
<dbReference type="Pfam" id="PF00680">
    <property type="entry name" value="RdRP_1"/>
    <property type="match status" value="1"/>
</dbReference>
<dbReference type="PRINTS" id="PR00966">
    <property type="entry name" value="NIAPOTYPTASE"/>
</dbReference>
<dbReference type="SMART" id="SM00487">
    <property type="entry name" value="DEXDc"/>
    <property type="match status" value="1"/>
</dbReference>
<dbReference type="SMART" id="SM00490">
    <property type="entry name" value="HELICc"/>
    <property type="match status" value="1"/>
</dbReference>
<dbReference type="SUPFAM" id="SSF56672">
    <property type="entry name" value="DNA/RNA polymerases"/>
    <property type="match status" value="1"/>
</dbReference>
<dbReference type="SUPFAM" id="SSF52540">
    <property type="entry name" value="P-loop containing nucleoside triphosphate hydrolases"/>
    <property type="match status" value="1"/>
</dbReference>
<dbReference type="SUPFAM" id="SSF50494">
    <property type="entry name" value="Trypsin-like serine proteases"/>
    <property type="match status" value="1"/>
</dbReference>
<dbReference type="PROSITE" id="PS51744">
    <property type="entry name" value="HC_PRO_CPD"/>
    <property type="match status" value="1"/>
</dbReference>
<dbReference type="PROSITE" id="PS51192">
    <property type="entry name" value="HELICASE_ATP_BIND_1"/>
    <property type="match status" value="1"/>
</dbReference>
<dbReference type="PROSITE" id="PS51194">
    <property type="entry name" value="HELICASE_CTER"/>
    <property type="match status" value="1"/>
</dbReference>
<dbReference type="PROSITE" id="PS51436">
    <property type="entry name" value="POTYVIRUS_NIA_PRO"/>
    <property type="match status" value="1"/>
</dbReference>
<dbReference type="PROSITE" id="PS51871">
    <property type="entry name" value="PV_P1_PRO"/>
    <property type="match status" value="1"/>
</dbReference>
<dbReference type="PROSITE" id="PS50507">
    <property type="entry name" value="RDRP_SSRNA_POS"/>
    <property type="match status" value="1"/>
</dbReference>
<name>POLG_SPMMV</name>
<feature type="chain" id="PRO_0000420024" description="Genome polyprotein">
    <location>
        <begin position="1"/>
        <end position="3456"/>
    </location>
</feature>
<feature type="chain" id="PRO_5000147693" description="P1 proteinase" evidence="6">
    <location>
        <begin position="1"/>
        <end position="743"/>
    </location>
</feature>
<feature type="chain" id="PRO_5000147694" description="Helper component proteinase">
    <location>
        <begin position="744"/>
        <end position="1196"/>
    </location>
</feature>
<feature type="chain" id="PRO_5000147695" description="Protein P3" evidence="6">
    <location>
        <begin position="1197"/>
        <end position="1489"/>
    </location>
</feature>
<feature type="chain" id="PRO_5000147696" description="6 kDa protein 1">
    <location>
        <begin position="1490"/>
        <end position="1541"/>
    </location>
</feature>
<feature type="chain" id="PRO_5000147697" description="Cytoplasmic inclusion protein">
    <location>
        <begin position="1542"/>
        <end position="2181"/>
    </location>
</feature>
<feature type="chain" id="PRO_0000402492" description="6 kDa protein 2">
    <location>
        <begin position="2182"/>
        <end position="2234"/>
    </location>
</feature>
<feature type="chain" id="PRO_0000402493" description="Viral genome-linked protein">
    <location>
        <begin position="2235"/>
        <end position="2411"/>
    </location>
</feature>
<feature type="chain" id="PRO_0000402494" description="Nuclear inclusion protein A">
    <location>
        <begin position="2412"/>
        <end position="2642" status="uncertain"/>
    </location>
</feature>
<feature type="chain" id="PRO_0000402495" description="Nuclear inclusion protein B">
    <location>
        <begin position="2643" status="uncertain"/>
        <end position="3180" status="uncertain"/>
    </location>
</feature>
<feature type="chain" id="PRO_5000147698" description="Capsid protein">
    <location>
        <begin position="3181" status="uncertain"/>
        <end position="3456"/>
    </location>
</feature>
<feature type="domain" description="Peptidase S30" evidence="12">
    <location>
        <begin position="600"/>
        <end position="743"/>
    </location>
</feature>
<feature type="domain" description="Peptidase C6" evidence="11">
    <location>
        <begin position="1075"/>
        <end position="1196"/>
    </location>
</feature>
<feature type="repeat" description="HAT 1">
    <location>
        <begin position="1094"/>
        <end position="1126"/>
    </location>
</feature>
<feature type="domain" description="Helicase ATP-binding" evidence="8">
    <location>
        <begin position="1617"/>
        <end position="1768"/>
    </location>
</feature>
<feature type="domain" description="Helicase C-terminal" evidence="9">
    <location>
        <begin position="1787"/>
        <end position="1947"/>
    </location>
</feature>
<feature type="domain" description="Peptidase C4" evidence="10">
    <location>
        <begin position="2412"/>
        <end position="2636"/>
    </location>
</feature>
<feature type="repeat" description="HAT 2">
    <location>
        <begin position="2597"/>
        <end position="2629"/>
    </location>
</feature>
<feature type="domain" description="RdRp catalytic" evidence="7">
    <location>
        <begin position="2891"/>
        <end position="3011"/>
    </location>
</feature>
<feature type="repeat" description="HAT 3">
    <location>
        <begin position="3082"/>
        <end position="3115"/>
    </location>
</feature>
<feature type="active site" description="For P1 proteinase activity" evidence="12">
    <location>
        <position position="640"/>
    </location>
</feature>
<feature type="active site" description="For P1 proteinase activity" evidence="12">
    <location>
        <position position="652"/>
    </location>
</feature>
<feature type="active site" description="For P1 proteinase activity" evidence="12">
    <location>
        <position position="689"/>
    </location>
</feature>
<feature type="active site" description="For helper component proteinase activity" evidence="11">
    <location>
        <position position="1083"/>
    </location>
</feature>
<feature type="active site" description="For helper component proteinase activity" evidence="11">
    <location>
        <position position="1155"/>
    </location>
</feature>
<feature type="active site" description="For nuclear inclusion protein A activity" evidence="10">
    <location>
        <position position="2457"/>
    </location>
</feature>
<feature type="active site" description="For nuclear inclusion protein A activity" evidence="10">
    <location>
        <position position="2494"/>
    </location>
</feature>
<feature type="active site" description="For nuclear inclusion protein A activity" evidence="10">
    <location>
        <position position="2566"/>
    </location>
</feature>
<feature type="binding site" evidence="8">
    <location>
        <begin position="1630"/>
        <end position="1637"/>
    </location>
    <ligand>
        <name>ATP</name>
        <dbReference type="ChEBI" id="CHEBI:30616"/>
    </ligand>
</feature>
<feature type="site" description="Cleavage; by P1 proteinase" evidence="12">
    <location>
        <begin position="743"/>
        <end position="744"/>
    </location>
</feature>
<feature type="site" description="Cleavage; by autolysis" evidence="11">
    <location>
        <begin position="1196"/>
        <end position="1197"/>
    </location>
</feature>
<feature type="site" description="Cleavage; by NIa-pro" evidence="6">
    <location>
        <begin position="1489"/>
        <end position="1490"/>
    </location>
</feature>
<feature type="site" description="Cleavage; by NIa-pro" evidence="6">
    <location>
        <begin position="1541"/>
        <end position="1542"/>
    </location>
</feature>
<feature type="site" description="Cleavage; by NIa-pro" evidence="6">
    <location>
        <begin position="2181"/>
        <end position="2182"/>
    </location>
</feature>
<feature type="site" description="Cleavage; by NIa-pro" evidence="6">
    <location>
        <begin position="2234"/>
        <end position="2235"/>
    </location>
</feature>
<feature type="site" description="Cleavage; by NIa-pro" evidence="6">
    <location>
        <begin position="2411"/>
        <end position="2412"/>
    </location>
</feature>
<feature type="modified residue" description="O-(5'-phospho-RNA)-tyrosine" evidence="3">
    <location>
        <position position="2304"/>
    </location>
</feature>
<keyword id="KW-0067">ATP-binding</keyword>
<keyword id="KW-0167">Capsid protein</keyword>
<keyword id="KW-0191">Covalent protein-RNA linkage</keyword>
<keyword id="KW-1139">Helical capsid protein</keyword>
<keyword id="KW-0347">Helicase</keyword>
<keyword id="KW-1036">Host cytoplasmic vesicle</keyword>
<keyword id="KW-0945">Host-virus interaction</keyword>
<keyword id="KW-0378">Hydrolase</keyword>
<keyword id="KW-1090">Inhibition of host innate immune response by virus</keyword>
<keyword id="KW-0547">Nucleotide-binding</keyword>
<keyword id="KW-0548">Nucleotidyltransferase</keyword>
<keyword id="KW-0597">Phosphoprotein</keyword>
<keyword id="KW-0645">Protease</keyword>
<keyword id="KW-1185">Reference proteome</keyword>
<keyword id="KW-0677">Repeat</keyword>
<keyword id="KW-0696">RNA-directed RNA polymerase</keyword>
<keyword id="KW-0720">Serine protease</keyword>
<keyword id="KW-0941">Suppressor of RNA silencing</keyword>
<keyword id="KW-0788">Thiol protease</keyword>
<keyword id="KW-0808">Transferase</keyword>
<keyword id="KW-0899">Viral immunoevasion</keyword>
<keyword id="KW-0693">Viral RNA replication</keyword>
<keyword id="KW-0946">Virion</keyword>
<reference key="1">
    <citation type="journal article" date="1998" name="Virus Res.">
        <title>The nucleotide sequence and genome organization of the whitefly transmitted sweetpotato mild mottle virus: a close relationship with members of the family Potyviridae.</title>
        <authorList>
            <person name="Colinet D."/>
            <person name="Kummert J."/>
            <person name="Lepoivre P."/>
        </authorList>
    </citation>
    <scope>NUCLEOTIDE SEQUENCE [GENOMIC RNA]</scope>
</reference>
<comment type="function">
    <molecule>Helper component proteinase</molecule>
    <text evidence="2">Required for aphid transmission and also has proteolytic activity. Only cleaves a Gly-Gly dipeptide at its own C-terminus. Interacts with virions and aphid stylets. Acts as a suppressor of RNA-mediated gene silencing, also known as post-transcriptional gene silencing (PTGS), a mechanism of plant viral defense that limits the accumulation of viral RNAs. May have RNA-binding activity.</text>
</comment>
<comment type="function">
    <molecule>Cytoplasmic inclusion protein</molecule>
    <text>Has helicase activity. It may be involved in replication.</text>
</comment>
<comment type="function">
    <molecule>6 kDa protein 1</molecule>
    <text evidence="4">Indispensable for virus replication.</text>
</comment>
<comment type="function">
    <molecule>6 kDa protein 2</molecule>
    <text evidence="3">Indispensable for virus replication.</text>
</comment>
<comment type="function">
    <molecule>Viral genome-linked protein</molecule>
    <text evidence="5">Mediates the cap-independent, EIF4E-dependent translation of viral genomic RNAs (By similarity). Binds to the cap-binding site of host EIF4E and thus interferes with the host EIF4E-dependent mRNA export and translation (By similarity). VPg-RNA directly binds EIF4E and is a template for transcription (By similarity). Also forms trimeric complexes with EIF4E-EIF4G, which are templates for translation (By similarity).</text>
</comment>
<comment type="function">
    <molecule>Nuclear inclusion protein A</molecule>
    <text evidence="2">Has RNA-binding and proteolytic activities.</text>
</comment>
<comment type="function">
    <molecule>Nuclear inclusion protein B</molecule>
    <text>An RNA-dependent RNA polymerase that plays an essential role in the virus replication.</text>
</comment>
<comment type="function">
    <molecule>Capsid protein</molecule>
    <text evidence="2">Involved in aphid transmission, cell-to-cell and systemis movement, encapsidation of the viral RNA and in the regulation of viral RNA amplification.</text>
</comment>
<comment type="catalytic activity">
    <reaction evidence="7">
        <text>RNA(n) + a ribonucleoside 5'-triphosphate = RNA(n+1) + diphosphate</text>
        <dbReference type="Rhea" id="RHEA:21248"/>
        <dbReference type="Rhea" id="RHEA-COMP:14527"/>
        <dbReference type="Rhea" id="RHEA-COMP:17342"/>
        <dbReference type="ChEBI" id="CHEBI:33019"/>
        <dbReference type="ChEBI" id="CHEBI:61557"/>
        <dbReference type="ChEBI" id="CHEBI:140395"/>
        <dbReference type="EC" id="2.7.7.48"/>
    </reaction>
</comment>
<comment type="catalytic activity">
    <reaction evidence="2">
        <text>Hydrolyzes glutaminyl bonds, and activity is further restricted by preferences for the amino acids in P6 - P1' that vary with the species of potyvirus, e.g. Glu-Xaa-Xaa-Tyr-Xaa-Gln-|-(Ser or Gly) for the enzyme from tobacco etch virus. The natural substrate is the viral polyprotein, but other proteins and oligopeptides containing the appropriate consensus sequence are also cleaved.</text>
        <dbReference type="EC" id="3.4.22.44"/>
    </reaction>
</comment>
<comment type="catalytic activity">
    <reaction evidence="2">
        <text>Hydrolyzes a Gly-|-Gly bond at its own C-terminus, commonly in the sequence -Tyr-Xaa-Val-Gly-|-Gly, in the processing of the potyviral polyprotein.</text>
        <dbReference type="EC" id="3.4.22.45"/>
    </reaction>
</comment>
<comment type="subcellular location">
    <molecule>6 kDa protein 1</molecule>
    <subcellularLocation>
        <location>Host cytoplasmic vesicle</location>
    </subcellularLocation>
    <text evidence="4">Probably colocalizes with 6K2-induced vesicles associated with host chloroplasts.</text>
</comment>
<comment type="subcellular location">
    <molecule>6 kDa protein 2</molecule>
    <subcellularLocation>
        <location evidence="3">Host cytoplasmic vesicle</location>
    </subcellularLocation>
    <text evidence="3">6K-induced vesicles associate with host chloroplasts.</text>
</comment>
<comment type="subcellular location">
    <molecule>Capsid protein</molecule>
    <subcellularLocation>
        <location evidence="13">Virion</location>
    </subcellularLocation>
</comment>
<comment type="domain">
    <molecule>Helper component proteinase</molecule>
    <text>The N-terminus is involved in interaction with stylets. The central part is involved in interaction with virions and the C-terminus is involved in cell-to cell movement of the virus.</text>
</comment>
<comment type="PTM">
    <molecule>Viral genome-linked protein</molecule>
    <text evidence="3">VPg is uridylylated by the polymerase and is covalently attached to the 5'-end of the genomic RNA. This uridylylated form acts as a nucleotide-peptide primer for the polymerase (By similarity).</text>
</comment>
<comment type="PTM">
    <molecule>Genome polyprotein</molecule>
    <text evidence="1">Genome polyprotein of potyviruses undergoes post-translational proteolytic processing by the main proteinase NIa-pro resulting in the production of at least ten individual proteins. The P1 proteinase and the HC-pro cleave only their respective C-termini autocatalytically. 6K1 is essential for proper proteolytic separation of P3 from CI (By similarity).</text>
</comment>
<sequence length="3456" mass="390285">MGKSKLTYKQCIAKWGKAALEAQNNGSRRSVSVGTHQIAANIFAFYDAKDYHLFAMGKRGGLTPAAEQLRIAIARGTIYKVQYNCHFCPDCDVIVDSEEGWFCEDCGSQFNKRDDNVLDNKNDVARALGGWNEYEDATWALFEAARADMLEVAPTVGQLEKEIRAIEKSAGKKLTAYEEEMLEELAYKLDVAKMNEEKQEEVLEETNFSISNDEFPALNGPQDEEVNVVIEETTEESAIEVAKEAEKSVEFEIIHEKTDEPISDAVNARMVATPVVATSVTKSGTVIDGKELVEKPKTTMWVTKPKTTAAIPATSSKSAVWVAKPKPASAIFIAEPVVKPAVRACNDVMNIGAMVCPIMVSANAQVEDATKEEEPVIKYNITFGSFNYEVSTKGERIQAAVQLDEIIEGPDIEPILICQTGSSHKSETKKAAKGLFVQDKFSVIGNKVLCKSFPAFNNFMNETRLGGIYRTRKGNYKNAALRLLKATKVQVFYDGIKDIFECPYCHVSSNELEGLNGDNCEKCKDLFYKHIDDPRKVEEEYLMVPLVPIDQHVHEEHSIISKAKWEAHESICEGEVNIVKIFDGKPTASKKKFKTMQAPNVANIPLDDFMQELVEICLERNTPIEIIGGVKSFNVVKLRHATRDISKSGEDDMYPTEREWFCHKNKLCLCGGIEREKKVRSFEVRPGWSGVILHKNQVAECDWDKFVFIDDICVVQGRNLITNKIENALEKKGATRLKQIQFYASSVVPNFKDEFDRASRLKADHEPYESSNNELIGRLARLVAAVIPKGHLYCKTCCLRVIKSKRADIVNALSKAKQRGERDEFIYDELIKLFELQAPPPYKIATITSDDDMFAHIRIGWKPYSGRLSLIMQHLQGLHTSISMLHQSLAGAQNDQQIDRQALHNQVRILHQRNEEHMPFLKKAVDEIQLLNATDQVANARELYLDTRATSTGDFDILRKYQSIYEFFPNIMSRANKVGMAVIKSETSLSKAFALMDNAKSMNAIHTLIGEDVIDNTSGACLMKNDKTFFSIGCKQGVDGSKMYGPLCPTKQHVRIHRVESNMQIPLPTFHDATVWEFNEGYCYANQLAIMVGFINEDEMEFYKNQMNQIVLNLGAWPTFEQYLVELRAISLDYPKVRGCPAAIHLVSHANKLIHVLGQFGTINQGWHALEVATVGELVDLCHKKVEGEMLTYKVGGIYDWVTKKNAFIDLFEHHPENIFKICTSPSVLWLFARSCEKHDFINDIMARDHSLVGLFIKLEYVGKHLHIFQSVDDVCVEYAASMREIIEEHADIHGLRDSVVDRMVHAYHNEVREANKYELVDRILEKNIGLIAKEISSRKLITMYHRDLFSWHEWQRLKLMPHSSNAQKLFEEANERAYGKQSWNLRVIWGACKEVLYAATHGVYVRVKGTTVRCADAVVYGFYGRTRAMVSSWASEAWGAIFTSCLRALVVMVVTAYISTWIPKIRKMIKREKKQFEDLGDGELYVEQHGKKEEAFLFKICAIFALIAGIVDYEWGAAACATMNKVRSICTVLGSVGIESHANEPNDKVEQDLKESLKFTSFEIEVPTWFYHNDMTFERWFQHQIQYGNVCADPIYSGPLRMLAITESSAREVAMNIRTSGETDVRVYSGVGGGKSTRLPKELSMFGHVLICVPTRVLAESLLTSFMVLFNMDVNVAYRGRIHTGNAPITIMTYGYALNFLVHKPMELNRYDYVLLDEINTNPVEFAPLFSFIKTTDPKKKIVKLSATHAGMDCECETRHKIKVETLSEMPIESWVSMQGSGVVGDATSVGDVILVFVASFKDVDTCANGLRSKGFKVLKVDSRNFRRDADVDKQIQSLGEGKKFIVATNIIENGVTFNIDVVVDFGEKISPNLSSDERCITLGRQRISRAERIQRFGRAGRIKPGTVLRFGRGNLVDALPSVLTATESALLCFAHGIKPVCDRVDVAAIGTLTRQQALVSGQFELNKLLVAHSATPSGQIPRVVYELFKPLLLRTDAVPICSSYNAIAACNWLPLSTYMRRNEKNEHVLATKIPWYCSDLSEDFNIKLAECVKSCMSTSNARFIVDNVNFITVAHKISVGEKTVGQAKLMVGELLENSKSWRDGLLHVQSSSVTRSLVGLCTSWYQRRAKAALDRLDLQVNRLQLLYDQLGQVEITSDYDKLVEFFTENGECAAYLESQSKTDFLEKHVLELRQPAITKNVVGTAMFAVALTGCLFWWWMKRNEKYEFIEQHGKKIRLNRDKRNACFVFSGTDDAMVEEYGVEYSQDVIHGRMSKAQKARQMKLKGKKPGSDTRVKPFKVLYGIDPNDYDTVALSAGGLTTEAVPVGEASLIDLMLELDDETGIFRKQVVNELKLKYTNNANGEQAMVRLTPHDSRRATIGSFMPSGFPDHHGEWRQTGAAEIIKEKNVAVDSHVGTPTVDAEDKHIASRLAIVRTHKGETHGIFHGDKLITPFHTFKNACGNDTLTVQSLRGLYDYGILSRQKMEQVPKQDIMVLVNPIDVTPFKQSQIFRPPIQCEVAYMIVCRRTPNGLRFEKTQETEIFPLGKQYGGVWKHGCDTRLGDCGGPIIACRDRKIVGFNGGRLMQMKYNTVLAHIFEPVNETFIEMLAKMEYAKGFWKFNPELVEWSRLLPTTTSFPIQKQIQGVESHGKPGDKCCGGNLISVGFANVTRISKHVIKGKRPSFVEYCNTYPDNIFMRDNLCEHYGPSILSKAAFYKDFTKYDDPVKVGRLDCYAFDTALAMVHDTLSQLGFHGNSGSQWDIAEIFDDLNKKSSMGALYSGKKGQWMHGLTPEDAISLAVESYALLNSGHLGVWSGSLKAELRHVDKLKEGKTRVFTGAPIDTLLAGKILVDNFNNYFYKCHLQGPWTVGINKFNRGWNKLANYFNHDWVFIDCDGSRFDSSIPPIMFNAVCMLRSVFGDLDPDENQTLSNLYTEIVNTPILTIEGNIIRKFRGNNSGQPSTVVDNTLILMIAMEYAIAKVFVTRPDIKYVCNGDDLLINCPRSTANAISEHFKDVFADLSLNYDFDHVCDKITDVDFMSHSFMWLDTEQMYIPKLDKERIVAILEWERSDEQFRTRSALNAAYIESFGYEDLMTEIEKFAHFWAKKHGLNDVLMEREKVRSLYVDENFDASRFEKFYPESFSPFDVYVEPHASTSKTIEELQQEMEDLDSDTTITVVQRETQKAGIRDQIEALRAQQIVRPPEAQLQPDVTPAQIVTFEPPRVTGFGALWIPRQQRNYMTPSYIEKIKAYVPHSNLIESGLASEAQLTSWFENTCRDYQVSMDVFMSTILPAWIVNCIINGTSQERTNEHTWRAVIMANMEDQEVLYYPIKPIIINAQPTLRQVMRHFGEQAVAQYMNSLQVGKPFTVKGAVTAGYANVQDAWLGIDFLRDTMKLTTKQMEVKHQIIAANVTRRKIRVFALAAPGDGDELDTERHVVDDVARGRHSLRGAQLD</sequence>
<protein>
    <recommendedName>
        <fullName>Genome polyprotein</fullName>
    </recommendedName>
    <component>
        <recommendedName>
            <fullName>P1 proteinase</fullName>
            <ecNumber evidence="2">3.4.-.-</ecNumber>
        </recommendedName>
        <alternativeName>
            <fullName>N-terminal protein</fullName>
        </alternativeName>
    </component>
    <component>
        <recommendedName>
            <fullName>Helper component proteinase</fullName>
            <shortName>HC-pro</shortName>
            <ecNumber evidence="2">3.4.22.45</ecNumber>
        </recommendedName>
    </component>
    <component>
        <recommendedName>
            <fullName>Protein P3</fullName>
        </recommendedName>
    </component>
    <component>
        <recommendedName>
            <fullName>6 kDa protein 1</fullName>
            <shortName>6K1</shortName>
        </recommendedName>
    </component>
    <component>
        <recommendedName>
            <fullName>Cytoplasmic inclusion protein</fullName>
            <shortName>CI</shortName>
            <ecNumber>3.6.4.-</ecNumber>
        </recommendedName>
    </component>
    <component>
        <recommendedName>
            <fullName>6 kDa protein 2</fullName>
            <shortName>6K2</shortName>
        </recommendedName>
    </component>
    <component>
        <recommendedName>
            <fullName>Viral genome-linked protein</fullName>
        </recommendedName>
        <alternativeName>
            <fullName>VPg</fullName>
        </alternativeName>
    </component>
    <component>
        <recommendedName>
            <fullName>Nuclear inclusion protein A</fullName>
            <shortName>NI-a</shortName>
            <shortName>NIa</shortName>
            <ecNumber>3.4.22.44</ecNumber>
        </recommendedName>
        <alternativeName>
            <fullName>49 kDa proteinase</fullName>
            <shortName>49 kDa-Pro</shortName>
        </alternativeName>
        <alternativeName>
            <fullName>NIa-pro</fullName>
        </alternativeName>
    </component>
    <component>
        <recommendedName>
            <fullName>Nuclear inclusion protein B</fullName>
            <shortName>NI-b</shortName>
            <shortName>NIb</shortName>
            <ecNumber>2.7.7.48</ecNumber>
        </recommendedName>
        <alternativeName>
            <fullName>RNA-directed RNA polymerase</fullName>
        </alternativeName>
    </component>
    <component>
        <recommendedName>
            <fullName>Capsid protein</fullName>
            <shortName>CP</shortName>
        </recommendedName>
        <alternativeName>
            <fullName>Coat protein</fullName>
        </alternativeName>
    </component>
</protein>
<accession>P89201</accession>
<evidence type="ECO:0000250" key="1"/>
<evidence type="ECO:0000250" key="2">
    <source>
        <dbReference type="UniProtKB" id="P04517"/>
    </source>
</evidence>
<evidence type="ECO:0000250" key="3">
    <source>
        <dbReference type="UniProtKB" id="P09814"/>
    </source>
</evidence>
<evidence type="ECO:0000250" key="4">
    <source>
        <dbReference type="UniProtKB" id="P13529"/>
    </source>
</evidence>
<evidence type="ECO:0000250" key="5">
    <source>
        <dbReference type="UniProtKB" id="P18247"/>
    </source>
</evidence>
<evidence type="ECO:0000255" key="6"/>
<evidence type="ECO:0000255" key="7">
    <source>
        <dbReference type="PROSITE-ProRule" id="PRU00539"/>
    </source>
</evidence>
<evidence type="ECO:0000255" key="8">
    <source>
        <dbReference type="PROSITE-ProRule" id="PRU00541"/>
    </source>
</evidence>
<evidence type="ECO:0000255" key="9">
    <source>
        <dbReference type="PROSITE-ProRule" id="PRU00542"/>
    </source>
</evidence>
<evidence type="ECO:0000255" key="10">
    <source>
        <dbReference type="PROSITE-ProRule" id="PRU00766"/>
    </source>
</evidence>
<evidence type="ECO:0000255" key="11">
    <source>
        <dbReference type="PROSITE-ProRule" id="PRU01080"/>
    </source>
</evidence>
<evidence type="ECO:0000255" key="12">
    <source>
        <dbReference type="PROSITE-ProRule" id="PRU01219"/>
    </source>
</evidence>
<evidence type="ECO:0000305" key="13"/>
<organismHost>
    <name type="scientific">Ipomoea batatas</name>
    <name type="common">Sweet potato</name>
    <name type="synonym">Convolvulus batatas</name>
    <dbReference type="NCBI Taxonomy" id="4120"/>
</organismHost>
<proteinExistence type="evidence at transcript level"/>